<reference key="1">
    <citation type="journal article" date="2004" name="Nucleic Acids Res.">
        <title>Comparative analysis of the Borrelia garinii genome.</title>
        <authorList>
            <person name="Gloeckner G."/>
            <person name="Lehmann R."/>
            <person name="Romualdi A."/>
            <person name="Pradella S."/>
            <person name="Schulte-Spechtel U."/>
            <person name="Schilhabel M."/>
            <person name="Wilske B."/>
            <person name="Suehnel J."/>
            <person name="Platzer M."/>
        </authorList>
    </citation>
    <scope>NUCLEOTIDE SEQUENCE [LARGE SCALE GENOMIC DNA]</scope>
    <source>
        <strain>ATCC BAA-2496 / DSM 23469 / PBi</strain>
    </source>
</reference>
<evidence type="ECO:0000255" key="1">
    <source>
        <dbReference type="HAMAP-Rule" id="MF_00291"/>
    </source>
</evidence>
<evidence type="ECO:0000305" key="2"/>
<comment type="similarity">
    <text evidence="1">Belongs to the universal ribosomal protein uS2 family.</text>
</comment>
<proteinExistence type="inferred from homology"/>
<gene>
    <name evidence="1" type="primary">rpsB</name>
    <name type="ordered locus">BG0124</name>
</gene>
<keyword id="KW-0687">Ribonucleoprotein</keyword>
<keyword id="KW-0689">Ribosomal protein</keyword>
<accession>Q662N9</accession>
<organism>
    <name type="scientific">Borrelia garinii subsp. bavariensis (strain ATCC BAA-2496 / DSM 23469 / PBi)</name>
    <name type="common">Borreliella bavariensis</name>
    <dbReference type="NCBI Taxonomy" id="290434"/>
    <lineage>
        <taxon>Bacteria</taxon>
        <taxon>Pseudomonadati</taxon>
        <taxon>Spirochaetota</taxon>
        <taxon>Spirochaetia</taxon>
        <taxon>Spirochaetales</taxon>
        <taxon>Borreliaceae</taxon>
        <taxon>Borreliella</taxon>
    </lineage>
</organism>
<sequence length="262" mass="29922">MAIITMKSLLEAGVHFGHQVKRLDPRMKRFIFSERNEIHILDLQKTLQGIKDSYELVQRVIKDGKKVLFVGTKKQASEIIEQEARRSDMPYVNNRWLGGMLSNFNTIRKSVQKLKKLEKMEVDGTFDMISKKEISQLNREKFKLAKNLTGIKDMETLPGAIFIIDPKREQIAINEARKLKIPIISVVDTNCNPDVIDCPIPGNDDAIRSVALFTKIISDAILESDKEVGIQIIENLNEEDLMKEIEIKNDKSDSIEEGRSNL</sequence>
<name>RS2_BORGP</name>
<dbReference type="EMBL" id="CP000013">
    <property type="protein sequence ID" value="AAU06982.1"/>
    <property type="molecule type" value="Genomic_DNA"/>
</dbReference>
<dbReference type="RefSeq" id="WP_011193475.1">
    <property type="nucleotide sequence ID" value="NZ_CP028872.1"/>
</dbReference>
<dbReference type="SMR" id="Q662N9"/>
<dbReference type="GeneID" id="45160919"/>
<dbReference type="KEGG" id="bga:BG0124"/>
<dbReference type="eggNOG" id="COG0052">
    <property type="taxonomic scope" value="Bacteria"/>
</dbReference>
<dbReference type="HOGENOM" id="CLU_040318_1_3_12"/>
<dbReference type="OrthoDB" id="9808036at2"/>
<dbReference type="Proteomes" id="UP000002276">
    <property type="component" value="Chromosome"/>
</dbReference>
<dbReference type="GO" id="GO:0022627">
    <property type="term" value="C:cytosolic small ribosomal subunit"/>
    <property type="evidence" value="ECO:0007669"/>
    <property type="project" value="TreeGrafter"/>
</dbReference>
<dbReference type="GO" id="GO:0003735">
    <property type="term" value="F:structural constituent of ribosome"/>
    <property type="evidence" value="ECO:0007669"/>
    <property type="project" value="InterPro"/>
</dbReference>
<dbReference type="GO" id="GO:0006412">
    <property type="term" value="P:translation"/>
    <property type="evidence" value="ECO:0007669"/>
    <property type="project" value="UniProtKB-UniRule"/>
</dbReference>
<dbReference type="CDD" id="cd01425">
    <property type="entry name" value="RPS2"/>
    <property type="match status" value="1"/>
</dbReference>
<dbReference type="FunFam" id="1.10.287.610:FF:000001">
    <property type="entry name" value="30S ribosomal protein S2"/>
    <property type="match status" value="1"/>
</dbReference>
<dbReference type="Gene3D" id="3.40.50.10490">
    <property type="entry name" value="Glucose-6-phosphate isomerase like protein, domain 1"/>
    <property type="match status" value="1"/>
</dbReference>
<dbReference type="Gene3D" id="1.10.287.610">
    <property type="entry name" value="Helix hairpin bin"/>
    <property type="match status" value="1"/>
</dbReference>
<dbReference type="HAMAP" id="MF_00291_B">
    <property type="entry name" value="Ribosomal_uS2_B"/>
    <property type="match status" value="1"/>
</dbReference>
<dbReference type="InterPro" id="IPR001865">
    <property type="entry name" value="Ribosomal_uS2"/>
</dbReference>
<dbReference type="InterPro" id="IPR005706">
    <property type="entry name" value="Ribosomal_uS2_bac/mit/plastid"/>
</dbReference>
<dbReference type="InterPro" id="IPR018130">
    <property type="entry name" value="Ribosomal_uS2_CS"/>
</dbReference>
<dbReference type="InterPro" id="IPR023591">
    <property type="entry name" value="Ribosomal_uS2_flav_dom_sf"/>
</dbReference>
<dbReference type="NCBIfam" id="TIGR01011">
    <property type="entry name" value="rpsB_bact"/>
    <property type="match status" value="1"/>
</dbReference>
<dbReference type="PANTHER" id="PTHR12534">
    <property type="entry name" value="30S RIBOSOMAL PROTEIN S2 PROKARYOTIC AND ORGANELLAR"/>
    <property type="match status" value="1"/>
</dbReference>
<dbReference type="PANTHER" id="PTHR12534:SF0">
    <property type="entry name" value="SMALL RIBOSOMAL SUBUNIT PROTEIN US2M"/>
    <property type="match status" value="1"/>
</dbReference>
<dbReference type="Pfam" id="PF00318">
    <property type="entry name" value="Ribosomal_S2"/>
    <property type="match status" value="1"/>
</dbReference>
<dbReference type="PRINTS" id="PR00395">
    <property type="entry name" value="RIBOSOMALS2"/>
</dbReference>
<dbReference type="SUPFAM" id="SSF52313">
    <property type="entry name" value="Ribosomal protein S2"/>
    <property type="match status" value="1"/>
</dbReference>
<dbReference type="PROSITE" id="PS00962">
    <property type="entry name" value="RIBOSOMAL_S2_1"/>
    <property type="match status" value="1"/>
</dbReference>
<dbReference type="PROSITE" id="PS00963">
    <property type="entry name" value="RIBOSOMAL_S2_2"/>
    <property type="match status" value="1"/>
</dbReference>
<feature type="chain" id="PRO_0000134137" description="Small ribosomal subunit protein uS2">
    <location>
        <begin position="1"/>
        <end position="262"/>
    </location>
</feature>
<protein>
    <recommendedName>
        <fullName evidence="1">Small ribosomal subunit protein uS2</fullName>
    </recommendedName>
    <alternativeName>
        <fullName evidence="2">30S ribosomal protein S2</fullName>
    </alternativeName>
</protein>